<proteinExistence type="evidence at protein level"/>
<protein>
    <recommendedName>
        <fullName evidence="6 7">Neurotoxin B-IV</fullName>
    </recommendedName>
</protein>
<keyword id="KW-0002">3D-structure</keyword>
<keyword id="KW-0903">Direct protein sequencing</keyword>
<keyword id="KW-1015">Disulfide bond</keyword>
<keyword id="KW-0379">Hydroxylation</keyword>
<keyword id="KW-0872">Ion channel impairing toxin</keyword>
<keyword id="KW-0528">Neurotoxin</keyword>
<keyword id="KW-0964">Secreted</keyword>
<keyword id="KW-0800">Toxin</keyword>
<keyword id="KW-0738">Voltage-gated sodium channel impairing toxin</keyword>
<reference key="1">
    <citation type="journal article" date="1981" name="J. Biol. Chem.">
        <title>Structure and action of heteronemertine polypeptide toxins. Amino acid sequence of Cerebratulus lacteus toxin B-II and revised structure of toxin B-IV.</title>
        <authorList>
            <person name="Blumenthal K.M."/>
            <person name="Keim P.S."/>
            <person name="Heinrikson R.L."/>
            <person name="Kem W.R."/>
        </authorList>
    </citation>
    <scope>PROTEIN SEQUENCE</scope>
    <scope>HYDROXYLATION AT PRO-10</scope>
    <scope>SEQUENCE REVISION</scope>
</reference>
<reference key="2">
    <citation type="journal article" date="1976" name="J. Biol. Chem.">
        <title>Structure and action of heteronemertine polypeptide toxins. Primary structure of Cerebratulus lacteus toxin B-IV.</title>
        <authorList>
            <person name="Blumenthal K.M."/>
            <person name="Kem W.R."/>
        </authorList>
    </citation>
    <scope>PROTEIN SEQUENCE</scope>
</reference>
<reference key="3">
    <citation type="journal article" date="1991" name="J. Biol. Chem.">
        <title>Mutagenesis of Cerebratulus lacteus neurotoxin B-IV identifies NH2-terminal sequences important for biological activity.</title>
        <authorList>
            <person name="Howell M.L."/>
            <person name="Blumenthal K.M."/>
        </authorList>
    </citation>
    <scope>MUTAGENESIS</scope>
</reference>
<reference key="4">
    <citation type="journal article" date="1996" name="J. Biol. Chem.">
        <title>Role of electrostatic interactions in defining the potency of neurotoxin B-IV from Cerebratulus lacteus.</title>
        <authorList>
            <person name="Wen P.H."/>
            <person name="Blumenthal K.M."/>
        </authorList>
    </citation>
    <scope>MUTAGENESIS OF TYR-9; GLU-13; ARG-17; ASP-21; ARG-25 AND ARG-34</scope>
</reference>
<reference key="5">
    <citation type="journal article" date="1997" name="Biochemistry">
        <title>Structure and function of Cerebratulus lacteus neurotoxin B-IV: tryptophan-30 is critical for function while lysines-18, -19, -29, and -33 are not required.</title>
        <authorList>
            <person name="Wen P.H."/>
            <person name="Blumenthal K.M."/>
        </authorList>
    </citation>
    <scope>MUTAGENESIS OF LYS-18; 18-LYS-LYS-19; LEU-22; LYS-29; TRP-30 AND LYS-33</scope>
</reference>
<reference key="6">
    <citation type="journal article" date="1992" name="Eur. J. Biochem.">
        <title>1H-NMR study of neurotoxin B-IV from the marine worm Cerebratulus lacteus. Solution properties, sequence-specific resonance assignments, secondary structure and global fold.</title>
        <authorList>
            <person name="Hansen P.E."/>
            <person name="Kem W.R."/>
            <person name="Bieber A.L."/>
            <person name="Norton R.S."/>
        </authorList>
    </citation>
    <scope>STRUCTURE BY NMR</scope>
</reference>
<reference key="7">
    <citation type="journal article" date="1997" name="J. Mol. Biol.">
        <title>Structure of neurotoxin B-IV from the marine worm Cerebratulus lacteus: a helical hairpin cross-linked by disulphide bonding.</title>
        <authorList>
            <person name="Barnham K.J."/>
            <person name="Dyke T.R."/>
            <person name="Kem W.R."/>
            <person name="Norton R.S."/>
        </authorList>
    </citation>
    <scope>STRUCTURE BY NMR</scope>
    <scope>DISULFIDE BONDS</scope>
</reference>
<feature type="chain" id="PRO_0000221572" description="Neurotoxin B-IV" evidence="1 5">
    <location>
        <begin position="1"/>
        <end position="55"/>
    </location>
</feature>
<feature type="modified residue" description="Hydroxyproline" evidence="1">
    <location>
        <position position="10"/>
    </location>
</feature>
<feature type="disulfide bond" evidence="3 10">
    <location>
        <begin position="12"/>
        <end position="52"/>
    </location>
</feature>
<feature type="disulfide bond" evidence="3 10">
    <location>
        <begin position="16"/>
        <end position="48"/>
    </location>
</feature>
<feature type="disulfide bond" evidence="3 10">
    <location>
        <begin position="23"/>
        <end position="41"/>
    </location>
</feature>
<feature type="disulfide bond" evidence="3 10">
    <location>
        <begin position="26"/>
        <end position="37"/>
    </location>
</feature>
<feature type="mutagenesis site" description="5-fold decrease in toxicity." evidence="2">
    <original>Y</original>
    <variation>F</variation>
    <location>
        <position position="9"/>
    </location>
</feature>
<feature type="mutagenesis site" description="No change in toxicity." evidence="2">
    <original>E</original>
    <variation>A</variation>
    <location>
        <position position="13"/>
    </location>
</feature>
<feature type="mutagenesis site" description="No change in toxicity." evidence="2">
    <original>E</original>
    <variation>Q</variation>
    <location>
        <position position="13"/>
    </location>
</feature>
<feature type="mutagenesis site" description="Complete loss of toxicity." evidence="2">
    <original>R</original>
    <variation>A</variation>
    <location>
        <position position="17"/>
    </location>
</feature>
<feature type="mutagenesis site" description="Complete loss of toxicity." evidence="2">
    <original>R</original>
    <variation>K</variation>
    <location>
        <position position="17"/>
    </location>
</feature>
<feature type="mutagenesis site" description="Complete loss of toxicity." evidence="2">
    <original>R</original>
    <variation>Q</variation>
    <location>
        <position position="17"/>
    </location>
</feature>
<feature type="mutagenesis site" description="Very low decrease in toxicity." evidence="4">
    <original>KK</original>
    <variation>QQ</variation>
    <location>
        <begin position="18"/>
        <end position="19"/>
    </location>
</feature>
<feature type="mutagenesis site" description="No change in toxicity." evidence="4">
    <original>K</original>
    <variation>Q</variation>
    <location>
        <position position="18"/>
    </location>
</feature>
<feature type="mutagenesis site" description="No change in toxicity." evidence="2">
    <original>D</original>
    <variation>A</variation>
    <location>
        <position position="21"/>
    </location>
</feature>
<feature type="mutagenesis site" description="No change in toxicity." evidence="2">
    <original>D</original>
    <variation>N</variation>
    <location>
        <position position="21"/>
    </location>
</feature>
<feature type="mutagenesis site" description="10-fold decrease in toxicity." evidence="2">
    <original>D</original>
    <variation>P</variation>
    <location>
        <position position="21"/>
    </location>
</feature>
<feature type="mutagenesis site" description="No change in toxicity." evidence="4">
    <original>L</original>
    <variation>D</variation>
    <location>
        <position position="22"/>
    </location>
</feature>
<feature type="mutagenesis site" description="No change in toxicity." evidence="2">
    <original>R</original>
    <variation>K</variation>
    <location>
        <position position="25"/>
    </location>
</feature>
<feature type="mutagenesis site" description="400-fold decrease in toxicity." evidence="2">
    <original>R</original>
    <variation>Q</variation>
    <location>
        <position position="25"/>
    </location>
</feature>
<feature type="mutagenesis site" description="No change in toxicity." evidence="4">
    <original>K</original>
    <variation>N</variation>
    <location>
        <position position="29"/>
    </location>
</feature>
<feature type="mutagenesis site" description="No change in toxicity." evidence="4">
    <original>W</original>
    <variation>F</variation>
    <location>
        <position position="30"/>
    </location>
</feature>
<feature type="mutagenesis site" description="41-fold decrease in toxicity." evidence="4">
    <original>W</original>
    <variation>S</variation>
    <location>
        <position position="30"/>
    </location>
</feature>
<feature type="mutagenesis site" description="5-fold decrease in toxicity." evidence="4">
    <original>W</original>
    <variation>Y</variation>
    <location>
        <position position="30"/>
    </location>
</feature>
<feature type="mutagenesis site" description="No decrease in toxicity." evidence="4">
    <original>K</original>
    <variation>N</variation>
    <location>
        <position position="33"/>
    </location>
</feature>
<feature type="mutagenesis site" description="80-fold decrease in toxicity." evidence="2">
    <original>R</original>
    <variation>A</variation>
    <location>
        <position position="34"/>
    </location>
</feature>
<feature type="mutagenesis site" description="8-fold decrease in toxicity." evidence="2">
    <original>R</original>
    <variation>K</variation>
    <location>
        <position position="34"/>
    </location>
</feature>
<feature type="mutagenesis site" description="20-fold decrease in toxicity." evidence="2">
    <original>R</original>
    <variation>Q</variation>
    <location>
        <position position="34"/>
    </location>
</feature>
<feature type="turn" evidence="11">
    <location>
        <begin position="7"/>
        <end position="10"/>
    </location>
</feature>
<feature type="helix" evidence="11">
    <location>
        <begin position="11"/>
        <end position="23"/>
    </location>
</feature>
<feature type="helix" evidence="11">
    <location>
        <begin position="28"/>
        <end position="30"/>
    </location>
</feature>
<feature type="helix" evidence="11">
    <location>
        <begin position="34"/>
        <end position="48"/>
    </location>
</feature>
<feature type="turn" evidence="11">
    <location>
        <begin position="49"/>
        <end position="51"/>
    </location>
</feature>
<dbReference type="PIR" id="A92340">
    <property type="entry name" value="NTHNB4"/>
</dbReference>
<dbReference type="PDB" id="1VIB">
    <property type="method" value="NMR"/>
    <property type="chains" value="A=1-55"/>
</dbReference>
<dbReference type="PDBsum" id="1VIB"/>
<dbReference type="SMR" id="P01525"/>
<dbReference type="EvolutionaryTrace" id="P01525"/>
<dbReference type="GO" id="GO:0005576">
    <property type="term" value="C:extracellular region"/>
    <property type="evidence" value="ECO:0007669"/>
    <property type="project" value="UniProtKB-SubCell"/>
</dbReference>
<dbReference type="GO" id="GO:0019871">
    <property type="term" value="F:sodium channel inhibitor activity"/>
    <property type="evidence" value="ECO:0007669"/>
    <property type="project" value="InterPro"/>
</dbReference>
<dbReference type="GO" id="GO:0090729">
    <property type="term" value="F:toxin activity"/>
    <property type="evidence" value="ECO:0007669"/>
    <property type="project" value="UniProtKB-KW"/>
</dbReference>
<dbReference type="Gene3D" id="1.10.287.120">
    <property type="entry name" value="Neurotoxin B-IV-like"/>
    <property type="match status" value="1"/>
</dbReference>
<dbReference type="InterPro" id="IPR012497">
    <property type="entry name" value="Neurotoxin_B-IV"/>
</dbReference>
<dbReference type="InterPro" id="IPR036586">
    <property type="entry name" value="Neurotoxin_B-IV-like_sf"/>
</dbReference>
<dbReference type="Pfam" id="PF07822">
    <property type="entry name" value="Toxin_13"/>
    <property type="match status" value="1"/>
</dbReference>
<dbReference type="SUPFAM" id="SSF57011">
    <property type="entry name" value="Neurotoxin B-IV"/>
    <property type="match status" value="1"/>
</dbReference>
<accession>P01525</accession>
<comment type="function">
    <text>This toxin increases the excitability of nerves by delaying the inactivation of the voltage-gated sodium channel (Nav). Only acts on some crustacean. Is more abundant, but 15-fold less toxic than neurotoxin B-II.</text>
</comment>
<comment type="subcellular location">
    <subcellularLocation>
        <location>Secreted</location>
    </subcellularLocation>
</comment>
<comment type="domain">
    <text evidence="9">Has the structural arrangement of two alpha-helices stabilized by disulfide bonds (CSalpha/alpha 4(S-S)).</text>
</comment>
<comment type="similarity">
    <text evidence="8">Belongs to the worm B-toxin family.</text>
</comment>
<sequence length="55" mass="6107">ASATWGAAYPACENNCRKKYDLCIRCQGKWAGKRGKCAAHCIIQKNNCKGKCKKE</sequence>
<evidence type="ECO:0000269" key="1">
    <source>
    </source>
</evidence>
<evidence type="ECO:0000269" key="2">
    <source>
    </source>
</evidence>
<evidence type="ECO:0000269" key="3">
    <source>
    </source>
</evidence>
<evidence type="ECO:0000269" key="4">
    <source>
    </source>
</evidence>
<evidence type="ECO:0000269" key="5">
    <source>
    </source>
</evidence>
<evidence type="ECO:0000303" key="6">
    <source>
    </source>
</evidence>
<evidence type="ECO:0000303" key="7">
    <source>
    </source>
</evidence>
<evidence type="ECO:0000305" key="8"/>
<evidence type="ECO:0000305" key="9">
    <source>
    </source>
</evidence>
<evidence type="ECO:0007744" key="10">
    <source>
        <dbReference type="PDB" id="1VIB"/>
    </source>
</evidence>
<evidence type="ECO:0007829" key="11">
    <source>
        <dbReference type="PDB" id="1VIB"/>
    </source>
</evidence>
<organism>
    <name type="scientific">Cerebratulus lacteus</name>
    <name type="common">Milky ribbon worm</name>
    <name type="synonym">Micrura lactea</name>
    <dbReference type="NCBI Taxonomy" id="6221"/>
    <lineage>
        <taxon>Eukaryota</taxon>
        <taxon>Metazoa</taxon>
        <taxon>Spiralia</taxon>
        <taxon>Lophotrochozoa</taxon>
        <taxon>Nemertea</taxon>
        <taxon>Pilidiophora</taxon>
        <taxon>Heteronemertea</taxon>
        <taxon>Lineidae</taxon>
        <taxon>Cerebratulus</taxon>
    </lineage>
</organism>
<name>NXB4_CERLA</name>